<dbReference type="EC" id="3.4.21.62"/>
<dbReference type="PDB" id="1C9J">
    <property type="method" value="X-ray"/>
    <property type="resolution" value="1.80 A"/>
    <property type="chains" value="A=1-267"/>
</dbReference>
<dbReference type="PDB" id="1C9M">
    <property type="method" value="X-ray"/>
    <property type="resolution" value="1.67 A"/>
    <property type="chains" value="A=1-269"/>
</dbReference>
<dbReference type="PDB" id="1C9N">
    <property type="method" value="X-ray"/>
    <property type="resolution" value="1.50 A"/>
    <property type="chains" value="A=1-267"/>
</dbReference>
<dbReference type="PDB" id="1GCI">
    <property type="method" value="X-ray"/>
    <property type="resolution" value="0.78 A"/>
    <property type="chains" value="A=1-269"/>
</dbReference>
<dbReference type="PDB" id="1IAV">
    <property type="method" value="X-ray"/>
    <property type="resolution" value="1.80 A"/>
    <property type="chains" value="A=1-269"/>
</dbReference>
<dbReference type="PDB" id="1JEA">
    <property type="method" value="X-ray"/>
    <property type="resolution" value="2.00 A"/>
    <property type="chains" value="A=1-269"/>
</dbReference>
<dbReference type="PDB" id="1NDQ">
    <property type="method" value="X-ray"/>
    <property type="resolution" value="1.80 A"/>
    <property type="chains" value="A=1-269"/>
</dbReference>
<dbReference type="PDB" id="1NDU">
    <property type="method" value="X-ray"/>
    <property type="resolution" value="1.60 A"/>
    <property type="chains" value="A=1-269"/>
</dbReference>
<dbReference type="PDB" id="1Q5P">
    <property type="method" value="X-ray"/>
    <property type="resolution" value="1.60 A"/>
    <property type="chains" value="A=1-269"/>
</dbReference>
<dbReference type="PDB" id="1SVN">
    <property type="method" value="X-ray"/>
    <property type="resolution" value="1.40 A"/>
    <property type="chains" value="A=1-269"/>
</dbReference>
<dbReference type="PDB" id="1TK2">
    <property type="method" value="X-ray"/>
    <property type="resolution" value="1.54 A"/>
    <property type="chains" value="A=1-263"/>
</dbReference>
<dbReference type="PDB" id="3BX1">
    <property type="method" value="X-ray"/>
    <property type="resolution" value="1.85 A"/>
    <property type="chains" value="A/B=1-269"/>
</dbReference>
<dbReference type="PDB" id="4CFY">
    <property type="method" value="X-ray"/>
    <property type="resolution" value="1.17 A"/>
    <property type="chains" value="A=1-269"/>
</dbReference>
<dbReference type="PDB" id="4CFZ">
    <property type="method" value="X-ray"/>
    <property type="resolution" value="1.57 A"/>
    <property type="chains" value="A=1-269"/>
</dbReference>
<dbReference type="PDB" id="4CG0">
    <property type="method" value="X-ray"/>
    <property type="resolution" value="1.36 A"/>
    <property type="chains" value="A=1-269"/>
</dbReference>
<dbReference type="PDB" id="5AQE">
    <property type="method" value="X-ray"/>
    <property type="resolution" value="1.10 A"/>
    <property type="chains" value="A=1-269"/>
</dbReference>
<dbReference type="PDB" id="5ARB">
    <property type="method" value="X-ray"/>
    <property type="resolution" value="1.15 A"/>
    <property type="chains" value="A=1-269"/>
</dbReference>
<dbReference type="PDB" id="5ARC">
    <property type="method" value="X-ray"/>
    <property type="resolution" value="1.10 A"/>
    <property type="chains" value="A=1-269"/>
</dbReference>
<dbReference type="PDB" id="5ARD">
    <property type="method" value="X-ray"/>
    <property type="resolution" value="1.55 A"/>
    <property type="chains" value="A=1-269"/>
</dbReference>
<dbReference type="PDB" id="6Y5S">
    <property type="method" value="X-ray"/>
    <property type="resolution" value="0.95 A"/>
    <property type="chains" value="A=1-269"/>
</dbReference>
<dbReference type="PDB" id="6Y5T">
    <property type="method" value="X-ray"/>
    <property type="resolution" value="1.10 A"/>
    <property type="chains" value="A=1-269"/>
</dbReference>
<dbReference type="PDBsum" id="1C9J"/>
<dbReference type="PDBsum" id="1C9M"/>
<dbReference type="PDBsum" id="1C9N"/>
<dbReference type="PDBsum" id="1GCI"/>
<dbReference type="PDBsum" id="1IAV"/>
<dbReference type="PDBsum" id="1JEA"/>
<dbReference type="PDBsum" id="1NDQ"/>
<dbReference type="PDBsum" id="1NDU"/>
<dbReference type="PDBsum" id="1Q5P"/>
<dbReference type="PDBsum" id="1SVN"/>
<dbReference type="PDBsum" id="1TK2"/>
<dbReference type="PDBsum" id="3BX1"/>
<dbReference type="PDBsum" id="4CFY"/>
<dbReference type="PDBsum" id="4CFZ"/>
<dbReference type="PDBsum" id="4CG0"/>
<dbReference type="PDBsum" id="5AQE"/>
<dbReference type="PDBsum" id="5ARB"/>
<dbReference type="PDBsum" id="5ARC"/>
<dbReference type="PDBsum" id="5ARD"/>
<dbReference type="PDBsum" id="6Y5S"/>
<dbReference type="PDBsum" id="6Y5T"/>
<dbReference type="SMR" id="P29600"/>
<dbReference type="DrugBank" id="DB01973">
    <property type="generic name" value="O-Benzylsulfonyl-Serine"/>
</dbReference>
<dbReference type="Allergome" id="903">
    <property type="allergen name" value="Bac l Subtilisin"/>
</dbReference>
<dbReference type="MEROPS" id="S08.003"/>
<dbReference type="BRENDA" id="3.4.21.62">
    <property type="organism ID" value="668"/>
</dbReference>
<dbReference type="EvolutionaryTrace" id="P29600"/>
<dbReference type="GO" id="GO:0005576">
    <property type="term" value="C:extracellular region"/>
    <property type="evidence" value="ECO:0007669"/>
    <property type="project" value="UniProtKB-SubCell"/>
</dbReference>
<dbReference type="GO" id="GO:0046872">
    <property type="term" value="F:metal ion binding"/>
    <property type="evidence" value="ECO:0007669"/>
    <property type="project" value="UniProtKB-KW"/>
</dbReference>
<dbReference type="GO" id="GO:0004252">
    <property type="term" value="F:serine-type endopeptidase activity"/>
    <property type="evidence" value="ECO:0007669"/>
    <property type="project" value="UniProtKB-EC"/>
</dbReference>
<dbReference type="GO" id="GO:0006508">
    <property type="term" value="P:proteolysis"/>
    <property type="evidence" value="ECO:0007669"/>
    <property type="project" value="UniProtKB-KW"/>
</dbReference>
<dbReference type="GO" id="GO:0030435">
    <property type="term" value="P:sporulation resulting in formation of a cellular spore"/>
    <property type="evidence" value="ECO:0007669"/>
    <property type="project" value="UniProtKB-KW"/>
</dbReference>
<dbReference type="CDD" id="cd07477">
    <property type="entry name" value="Peptidases_S8_Subtilisin_subset"/>
    <property type="match status" value="1"/>
</dbReference>
<dbReference type="Gene3D" id="3.40.50.200">
    <property type="entry name" value="Peptidase S8/S53 domain"/>
    <property type="match status" value="1"/>
</dbReference>
<dbReference type="InterPro" id="IPR000209">
    <property type="entry name" value="Peptidase_S8/S53_dom"/>
</dbReference>
<dbReference type="InterPro" id="IPR036852">
    <property type="entry name" value="Peptidase_S8/S53_dom_sf"/>
</dbReference>
<dbReference type="InterPro" id="IPR023827">
    <property type="entry name" value="Peptidase_S8_Asp-AS"/>
</dbReference>
<dbReference type="InterPro" id="IPR022398">
    <property type="entry name" value="Peptidase_S8_His-AS"/>
</dbReference>
<dbReference type="InterPro" id="IPR023828">
    <property type="entry name" value="Peptidase_S8_Ser-AS"/>
</dbReference>
<dbReference type="InterPro" id="IPR050131">
    <property type="entry name" value="Peptidase_S8_subtilisin-like"/>
</dbReference>
<dbReference type="InterPro" id="IPR015500">
    <property type="entry name" value="Peptidase_S8_subtilisin-rel"/>
</dbReference>
<dbReference type="InterPro" id="IPR034202">
    <property type="entry name" value="Subtilisin_Carlsberg-like"/>
</dbReference>
<dbReference type="PANTHER" id="PTHR43806:SF11">
    <property type="entry name" value="CEREVISIN-RELATED"/>
    <property type="match status" value="1"/>
</dbReference>
<dbReference type="PANTHER" id="PTHR43806">
    <property type="entry name" value="PEPTIDASE S8"/>
    <property type="match status" value="1"/>
</dbReference>
<dbReference type="Pfam" id="PF00082">
    <property type="entry name" value="Peptidase_S8"/>
    <property type="match status" value="1"/>
</dbReference>
<dbReference type="PRINTS" id="PR00723">
    <property type="entry name" value="SUBTILISIN"/>
</dbReference>
<dbReference type="SUPFAM" id="SSF52743">
    <property type="entry name" value="Subtilisin-like"/>
    <property type="match status" value="1"/>
</dbReference>
<dbReference type="PROSITE" id="PS51892">
    <property type="entry name" value="SUBTILASE"/>
    <property type="match status" value="1"/>
</dbReference>
<dbReference type="PROSITE" id="PS00136">
    <property type="entry name" value="SUBTILASE_ASP"/>
    <property type="match status" value="1"/>
</dbReference>
<dbReference type="PROSITE" id="PS00137">
    <property type="entry name" value="SUBTILASE_HIS"/>
    <property type="match status" value="1"/>
</dbReference>
<dbReference type="PROSITE" id="PS00138">
    <property type="entry name" value="SUBTILASE_SER"/>
    <property type="match status" value="1"/>
</dbReference>
<reference key="1">
    <citation type="journal article" date="1992" name="J. Mol. Biol.">
        <title>Crystal structure of the alkaline proteinase Savinase from Bacillus lentus at 1.4-A resolution.</title>
        <authorList>
            <person name="Betzel C."/>
            <person name="Klupsch S."/>
            <person name="Papendorf G."/>
            <person name="Hastrup S."/>
            <person name="Branner S."/>
            <person name="Wilson K.S."/>
        </authorList>
    </citation>
    <scope>X-RAY CRYSTALLOGRAPHY (1.4 ANGSTROMS)</scope>
</reference>
<reference key="2">
    <citation type="journal article" date="1996" name="Eur. J. Biochem.">
        <title>Backbone dynamics of the 269-residue protease Savinase determined from 15N-NMR relaxation measurements.</title>
        <authorList>
            <person name="Remerowski M.L."/>
            <person name="Pepermans H.A.M."/>
            <person name="Hilbers C.W."/>
            <person name="van de Ven F.J.M."/>
        </authorList>
    </citation>
    <scope>STRUCTURE BY NMR</scope>
</reference>
<reference key="3">
    <citation type="journal article" date="1998" name="Biochemistry">
        <title>The 0.78-A structure of a serine protease: Bacillus lentus subtilisin.</title>
        <authorList>
            <person name="Kuhn P."/>
            <person name="Knapp M."/>
            <person name="Soltis S.M."/>
            <person name="Ganshaw G."/>
            <person name="Thoene M."/>
            <person name="Bott R."/>
        </authorList>
    </citation>
    <scope>X-RAY CRYSTALLOGRAPHY (0.78 ANGSTROMS)</scope>
</reference>
<organism>
    <name type="scientific">Lederbergia lenta</name>
    <name type="common">Bacillus lentus</name>
    <dbReference type="NCBI Taxonomy" id="1467"/>
    <lineage>
        <taxon>Bacteria</taxon>
        <taxon>Bacillati</taxon>
        <taxon>Bacillota</taxon>
        <taxon>Bacilli</taxon>
        <taxon>Bacillales</taxon>
        <taxon>Bacillaceae</taxon>
        <taxon>Lederbergia</taxon>
    </lineage>
</organism>
<keyword id="KW-0002">3D-structure</keyword>
<keyword id="KW-0106">Calcium</keyword>
<keyword id="KW-0378">Hydrolase</keyword>
<keyword id="KW-0479">Metal-binding</keyword>
<keyword id="KW-0645">Protease</keyword>
<keyword id="KW-0964">Secreted</keyword>
<keyword id="KW-0720">Serine protease</keyword>
<keyword id="KW-0749">Sporulation</keyword>
<evidence type="ECO:0000255" key="1">
    <source>
        <dbReference type="PROSITE-ProRule" id="PRU01240"/>
    </source>
</evidence>
<evidence type="ECO:0000305" key="2"/>
<evidence type="ECO:0007829" key="3">
    <source>
        <dbReference type="PDB" id="1GCI"/>
    </source>
</evidence>
<evidence type="ECO:0007829" key="4">
    <source>
        <dbReference type="PDB" id="3BX1"/>
    </source>
</evidence>
<evidence type="ECO:0007829" key="5">
    <source>
        <dbReference type="PDB" id="4CFY"/>
    </source>
</evidence>
<evidence type="ECO:0007829" key="6">
    <source>
        <dbReference type="PDB" id="4CFZ"/>
    </source>
</evidence>
<name>SUBS_LEDLE</name>
<protein>
    <recommendedName>
        <fullName>Subtilisin Savinase</fullName>
        <ecNumber>3.4.21.62</ecNumber>
    </recommendedName>
    <alternativeName>
        <fullName>Alkaline protease</fullName>
    </alternativeName>
</protein>
<sequence length="269" mass="26698">AQSVPWGISRVQAPAAHNRGLTGSGVKVAVLDTGISTHPDLNIRGGASFVPGEPSTQDGNGHGTHVAGTIAALNNSIGVLGVAPSAELYAVKVLGASGSGSVSSIAQGLEWAGNNGMHVANLSLGSPSPSATLEQAVNSATSRGVLVVAASGNSGAGSISYPARYANAMAVGATDQNNNRASFSQYGAGLDIVAPGVNVQSTYPGSTYASLNGTSMATPHVAGAAALVKQKNPSWSNVQIRNHLKNTATSLGSTNLYGSGLVNAEAATR</sequence>
<accession>P29600</accession>
<feature type="chain" id="PRO_0000076418" description="Subtilisin Savinase">
    <location>
        <begin position="1"/>
        <end position="269"/>
    </location>
</feature>
<feature type="domain" description="Peptidase S8" evidence="1">
    <location>
        <begin position="5"/>
        <end position="268"/>
    </location>
</feature>
<feature type="active site" description="Charge relay system" evidence="1">
    <location>
        <position position="32"/>
    </location>
</feature>
<feature type="active site" description="Charge relay system" evidence="1">
    <location>
        <position position="62"/>
    </location>
</feature>
<feature type="active site" description="Charge relay system" evidence="1">
    <location>
        <position position="215"/>
    </location>
</feature>
<feature type="binding site">
    <location>
        <position position="2"/>
    </location>
    <ligand>
        <name>Ca(2+)</name>
        <dbReference type="ChEBI" id="CHEBI:29108"/>
        <label>1</label>
    </ligand>
</feature>
<feature type="binding site">
    <location>
        <position position="40"/>
    </location>
    <ligand>
        <name>Ca(2+)</name>
        <dbReference type="ChEBI" id="CHEBI:29108"/>
        <label>1</label>
    </ligand>
</feature>
<feature type="binding site">
    <location>
        <position position="73"/>
    </location>
    <ligand>
        <name>Ca(2+)</name>
        <dbReference type="ChEBI" id="CHEBI:29108"/>
        <label>1</label>
    </ligand>
</feature>
<feature type="binding site">
    <location>
        <position position="75"/>
    </location>
    <ligand>
        <name>Ca(2+)</name>
        <dbReference type="ChEBI" id="CHEBI:29108"/>
        <label>1</label>
    </ligand>
</feature>
<feature type="binding site">
    <location>
        <position position="77"/>
    </location>
    <ligand>
        <name>Ca(2+)</name>
        <dbReference type="ChEBI" id="CHEBI:29108"/>
        <label>1</label>
    </ligand>
</feature>
<feature type="binding site">
    <location>
        <position position="79"/>
    </location>
    <ligand>
        <name>Ca(2+)</name>
        <dbReference type="ChEBI" id="CHEBI:29108"/>
        <label>1</label>
    </ligand>
</feature>
<feature type="binding site">
    <location>
        <position position="163"/>
    </location>
    <ligand>
        <name>Ca(2+)</name>
        <dbReference type="ChEBI" id="CHEBI:29108"/>
        <label>2</label>
    </ligand>
</feature>
<feature type="binding site">
    <location>
        <position position="165"/>
    </location>
    <ligand>
        <name>Ca(2+)</name>
        <dbReference type="ChEBI" id="CHEBI:29108"/>
        <label>2</label>
    </ligand>
</feature>
<feature type="binding site">
    <location>
        <position position="168"/>
    </location>
    <ligand>
        <name>Ca(2+)</name>
        <dbReference type="ChEBI" id="CHEBI:29108"/>
        <label>2</label>
    </ligand>
</feature>
<feature type="helix" evidence="3">
    <location>
        <begin position="6"/>
        <end position="10"/>
    </location>
</feature>
<feature type="helix" evidence="3">
    <location>
        <begin position="13"/>
        <end position="18"/>
    </location>
</feature>
<feature type="strand" evidence="3">
    <location>
        <begin position="27"/>
        <end position="33"/>
    </location>
</feature>
<feature type="strand" evidence="3">
    <location>
        <begin position="43"/>
        <end position="48"/>
    </location>
</feature>
<feature type="strand" evidence="6">
    <location>
        <begin position="55"/>
        <end position="57"/>
    </location>
</feature>
<feature type="strand" evidence="3">
    <location>
        <begin position="59"/>
        <end position="61"/>
    </location>
</feature>
<feature type="helix" evidence="3">
    <location>
        <begin position="62"/>
        <end position="71"/>
    </location>
</feature>
<feature type="strand" evidence="3">
    <location>
        <begin position="75"/>
        <end position="78"/>
    </location>
</feature>
<feature type="strand" evidence="3">
    <location>
        <begin position="87"/>
        <end position="92"/>
    </location>
</feature>
<feature type="strand" evidence="4">
    <location>
        <begin position="98"/>
        <end position="100"/>
    </location>
</feature>
<feature type="helix" evidence="3">
    <location>
        <begin position="102"/>
        <end position="114"/>
    </location>
</feature>
<feature type="strand" evidence="3">
    <location>
        <begin position="118"/>
        <end position="122"/>
    </location>
</feature>
<feature type="strand" evidence="3">
    <location>
        <begin position="126"/>
        <end position="128"/>
    </location>
</feature>
<feature type="helix" evidence="3">
    <location>
        <begin position="131"/>
        <end position="142"/>
    </location>
</feature>
<feature type="strand" evidence="3">
    <location>
        <begin position="146"/>
        <end position="150"/>
    </location>
</feature>
<feature type="strand" evidence="6">
    <location>
        <begin position="156"/>
        <end position="158"/>
    </location>
</feature>
<feature type="turn" evidence="3">
    <location>
        <begin position="162"/>
        <end position="164"/>
    </location>
</feature>
<feature type="strand" evidence="3">
    <location>
        <begin position="168"/>
        <end position="174"/>
    </location>
</feature>
<feature type="strand" evidence="5">
    <location>
        <begin position="178"/>
        <end position="180"/>
    </location>
</feature>
<feature type="strand" evidence="3">
    <location>
        <begin position="190"/>
        <end position="195"/>
    </location>
</feature>
<feature type="strand" evidence="3">
    <location>
        <begin position="197"/>
        <end position="203"/>
    </location>
</feature>
<feature type="turn" evidence="3">
    <location>
        <begin position="204"/>
        <end position="206"/>
    </location>
</feature>
<feature type="strand" evidence="3">
    <location>
        <begin position="207"/>
        <end position="211"/>
    </location>
</feature>
<feature type="helix" evidence="3">
    <location>
        <begin position="214"/>
        <end position="231"/>
    </location>
</feature>
<feature type="helix" evidence="3">
    <location>
        <begin position="237"/>
        <end position="246"/>
    </location>
</feature>
<feature type="helix" evidence="3">
    <location>
        <begin position="254"/>
        <end position="257"/>
    </location>
</feature>
<feature type="helix" evidence="3">
    <location>
        <begin position="264"/>
        <end position="267"/>
    </location>
</feature>
<proteinExistence type="evidence at protein level"/>
<comment type="function">
    <text>Subtilisin is an extracellular alkaline serine protease, it catalyzes the hydrolysis of proteins and peptide amides.</text>
</comment>
<comment type="catalytic activity">
    <reaction>
        <text>Hydrolysis of proteins with broad specificity for peptide bonds, and a preference for a large uncharged residue in P1. Hydrolyzes peptide amides.</text>
        <dbReference type="EC" id="3.4.21.62"/>
    </reaction>
</comment>
<comment type="cofactor">
    <cofactor>
        <name>Ca(2+)</name>
        <dbReference type="ChEBI" id="CHEBI:29108"/>
    </cofactor>
    <text>Binds 2 calcium ions per subunit.</text>
</comment>
<comment type="subcellular location">
    <subcellularLocation>
        <location>Secreted</location>
    </subcellularLocation>
</comment>
<comment type="biotechnology">
    <text>Used as a detergent protease. Sold under the name Savinase by Novozymes.</text>
</comment>
<comment type="miscellaneous">
    <text>Secretion of subtilisin is associated with onset of sporulation, and many mutations which block sporulation at early stages affect expression levels of subtilisin. However, subtilisin is not necessary for normal sporulation.</text>
</comment>
<comment type="similarity">
    <text evidence="2">Belongs to the peptidase S8 family.</text>
</comment>